<comment type="function">
    <text>Binds to myosin; probably involved in interaction with thick myofilaments in the A-band.</text>
</comment>
<comment type="tissue specificity">
    <text evidence="4">Skeletal muscle. Expressed at low levels in heart ventricles.</text>
</comment>
<comment type="similarity">
    <text evidence="5">Belongs to the immunoglobulin superfamily. MyBP family.</text>
</comment>
<protein>
    <recommendedName>
        <fullName>Myosin-binding protein H</fullName>
        <shortName>MyBP-H</shortName>
    </recommendedName>
    <alternativeName>
        <fullName>H-protein</fullName>
    </alternativeName>
</protein>
<evidence type="ECO:0000250" key="1">
    <source>
        <dbReference type="UniProtKB" id="O88599"/>
    </source>
</evidence>
<evidence type="ECO:0000255" key="2">
    <source>
        <dbReference type="PROSITE-ProRule" id="PRU00316"/>
    </source>
</evidence>
<evidence type="ECO:0000256" key="3">
    <source>
        <dbReference type="SAM" id="MobiDB-lite"/>
    </source>
</evidence>
<evidence type="ECO:0000269" key="4">
    <source>
    </source>
</evidence>
<evidence type="ECO:0000305" key="5"/>
<reference key="1">
    <citation type="submission" date="1996-08" db="EMBL/GenBank/DDBJ databases">
        <authorList>
            <person name="Ramos C.H.I."/>
            <person name="Fischman D.A."/>
            <person name="Reinach F.C."/>
        </authorList>
    </citation>
    <scope>NUCLEOTIDE SEQUENCE [MRNA]</scope>
</reference>
<reference key="2">
    <citation type="journal article" date="2009" name="PLoS Biol.">
        <title>Lineage-specific biology revealed by a finished genome assembly of the mouse.</title>
        <authorList>
            <person name="Church D.M."/>
            <person name="Goodstadt L."/>
            <person name="Hillier L.W."/>
            <person name="Zody M.C."/>
            <person name="Goldstein S."/>
            <person name="She X."/>
            <person name="Bult C.J."/>
            <person name="Agarwala R."/>
            <person name="Cherry J.L."/>
            <person name="DiCuccio M."/>
            <person name="Hlavina W."/>
            <person name="Kapustin Y."/>
            <person name="Meric P."/>
            <person name="Maglott D."/>
            <person name="Birtle Z."/>
            <person name="Marques A.C."/>
            <person name="Graves T."/>
            <person name="Zhou S."/>
            <person name="Teague B."/>
            <person name="Potamousis K."/>
            <person name="Churas C."/>
            <person name="Place M."/>
            <person name="Herschleb J."/>
            <person name="Runnheim R."/>
            <person name="Forrest D."/>
            <person name="Amos-Landgraf J."/>
            <person name="Schwartz D.C."/>
            <person name="Cheng Z."/>
            <person name="Lindblad-Toh K."/>
            <person name="Eichler E.E."/>
            <person name="Ponting C.P."/>
        </authorList>
    </citation>
    <scope>NUCLEOTIDE SEQUENCE [LARGE SCALE GENOMIC DNA]</scope>
    <source>
        <strain>C57BL/6J</strain>
    </source>
</reference>
<reference key="3">
    <citation type="journal article" date="2017" name="Circulation">
        <title>Experimental Modeling Supports a Role for MyBP-HL as a Novel Myofilament Component in Arrhythmia and Dilated Cardiomyopathy.</title>
        <authorList>
            <person name="Barefield D.Y."/>
            <person name="Puckelwartz M.J."/>
            <person name="Kim E.Y."/>
            <person name="Wilsbacher L.D."/>
            <person name="Vo A.H."/>
            <person name="Waters E.A."/>
            <person name="Earley J.U."/>
            <person name="Hadhazy M."/>
            <person name="Dellefave-Castillo L."/>
            <person name="Pesce L.L."/>
            <person name="McNally E.M."/>
        </authorList>
    </citation>
    <scope>TISSUE SPECIFICITY</scope>
</reference>
<sequence>MTGKATSEASVSTPEETAPEPAKVPTTEPSGEVAASESTGQEQAPEPQKPQAQDPAAPAASAMPAATKPEPPSEDVPSAPLRLTLEDVSHSSLTVSWEPPEKLGKLGLQGYVLEFCREGASEWVPVNPRPVMVTQQTVRNLALGDKFFLRVTAVSSAGAGPPAVLDQPVHIQEITEAPKIRVPRHLRQTYIRQVGESVNLQIPFQGKPKPQVSWTHNGHALDNQRVNVRSGDQDSILFIRSAQRADSGRYELTVHLEGLEAKASIDILVIEKPGPPSSIKLLDVWGCNAALEWTPPQDTGNTELLGYTVQKADKRTGQWFTVLERYHPTTCTISDLIIGNSYSFRVFSENLCGLSDLATTTKELAHIHKADITAKPREFIERDFSEAPSFTQPLADHTSTPGYSTQLFCSVRASPKPKIIWMKNKMDIQGDPKYRAVSEQGVCTLEIRKPSPFDSGVYTCKAINVLGEASVDCRLEVKASATH</sequence>
<proteinExistence type="evidence at transcript level"/>
<name>MYBPH_MOUSE</name>
<dbReference type="EMBL" id="U68267">
    <property type="protein sequence ID" value="AAB08426.1"/>
    <property type="molecule type" value="mRNA"/>
</dbReference>
<dbReference type="EMBL" id="AC137104">
    <property type="status" value="NOT_ANNOTATED_CDS"/>
    <property type="molecule type" value="Genomic_DNA"/>
</dbReference>
<dbReference type="CCDS" id="CCDS35713.1"/>
<dbReference type="RefSeq" id="NP_001344444.1">
    <property type="nucleotide sequence ID" value="NM_001357515.1"/>
</dbReference>
<dbReference type="RefSeq" id="NP_058029.2">
    <property type="nucleotide sequence ID" value="NM_016749.2"/>
</dbReference>
<dbReference type="RefSeq" id="XP_006529817.1">
    <property type="nucleotide sequence ID" value="XM_006529754.2"/>
</dbReference>
<dbReference type="RefSeq" id="XP_017177184.1">
    <property type="nucleotide sequence ID" value="XM_017321695.1"/>
</dbReference>
<dbReference type="SMR" id="P70402"/>
<dbReference type="BioGRID" id="207275">
    <property type="interactions" value="2"/>
</dbReference>
<dbReference type="FunCoup" id="P70402">
    <property type="interactions" value="44"/>
</dbReference>
<dbReference type="IntAct" id="P70402">
    <property type="interactions" value="1"/>
</dbReference>
<dbReference type="MINT" id="P70402"/>
<dbReference type="STRING" id="10090.ENSMUSP00000141104"/>
<dbReference type="GlyGen" id="P70402">
    <property type="glycosylation" value="3 sites, 1 O-linked glycan (3 sites)"/>
</dbReference>
<dbReference type="iPTMnet" id="P70402"/>
<dbReference type="PhosphoSitePlus" id="P70402"/>
<dbReference type="jPOST" id="P70402"/>
<dbReference type="PaxDb" id="10090-ENSMUSP00000141104"/>
<dbReference type="ProteomicsDB" id="252625"/>
<dbReference type="Antibodypedia" id="34541">
    <property type="antibodies" value="212 antibodies from 26 providers"/>
</dbReference>
<dbReference type="DNASU" id="53311"/>
<dbReference type="Ensembl" id="ENSMUST00000038445.13">
    <property type="protein sequence ID" value="ENSMUSP00000042195.7"/>
    <property type="gene ID" value="ENSMUSG00000042451.13"/>
</dbReference>
<dbReference type="Ensembl" id="ENSMUST00000191577.2">
    <property type="protein sequence ID" value="ENSMUSP00000141104.2"/>
    <property type="gene ID" value="ENSMUSG00000042451.13"/>
</dbReference>
<dbReference type="GeneID" id="53311"/>
<dbReference type="KEGG" id="mmu:53311"/>
<dbReference type="UCSC" id="uc007crh.1">
    <property type="organism name" value="mouse"/>
</dbReference>
<dbReference type="AGR" id="MGI:1858196"/>
<dbReference type="CTD" id="4608"/>
<dbReference type="MGI" id="MGI:1858196">
    <property type="gene designation" value="Mybph"/>
</dbReference>
<dbReference type="VEuPathDB" id="HostDB:ENSMUSG00000042451"/>
<dbReference type="eggNOG" id="ENOG502QVIQ">
    <property type="taxonomic scope" value="Eukaryota"/>
</dbReference>
<dbReference type="GeneTree" id="ENSGT00940000158040"/>
<dbReference type="HOGENOM" id="CLU_037185_0_0_1"/>
<dbReference type="InParanoid" id="P70402"/>
<dbReference type="OMA" id="LEWVPVN"/>
<dbReference type="OrthoDB" id="6107607at2759"/>
<dbReference type="PhylomeDB" id="P70402"/>
<dbReference type="TreeFam" id="TF334735"/>
<dbReference type="BioGRID-ORCS" id="53311">
    <property type="hits" value="2 hits in 79 CRISPR screens"/>
</dbReference>
<dbReference type="ChiTaRS" id="Mybph">
    <property type="organism name" value="mouse"/>
</dbReference>
<dbReference type="PRO" id="PR:P70402"/>
<dbReference type="Proteomes" id="UP000000589">
    <property type="component" value="Chromosome 1"/>
</dbReference>
<dbReference type="RNAct" id="P70402">
    <property type="molecule type" value="protein"/>
</dbReference>
<dbReference type="Bgee" id="ENSMUSG00000042451">
    <property type="expression patterns" value="Expressed in hindlimb stylopod muscle and 73 other cell types or tissues"/>
</dbReference>
<dbReference type="GO" id="GO:0032982">
    <property type="term" value="C:myosin filament"/>
    <property type="evidence" value="ECO:0007669"/>
    <property type="project" value="UniProtKB-KW"/>
</dbReference>
<dbReference type="GO" id="GO:0007155">
    <property type="term" value="P:cell adhesion"/>
    <property type="evidence" value="ECO:0007669"/>
    <property type="project" value="UniProtKB-KW"/>
</dbReference>
<dbReference type="CDD" id="cd00063">
    <property type="entry name" value="FN3"/>
    <property type="match status" value="2"/>
</dbReference>
<dbReference type="FunFam" id="2.60.40.10:FF:000557">
    <property type="entry name" value="Myosin binding protein Ha"/>
    <property type="match status" value="1"/>
</dbReference>
<dbReference type="FunFam" id="2.60.40.10:FF:000225">
    <property type="entry name" value="Myosin-binding protein C, cardiac-type"/>
    <property type="match status" value="1"/>
</dbReference>
<dbReference type="FunFam" id="2.60.40.10:FF:000031">
    <property type="entry name" value="Myosin-binding protein C, slow type"/>
    <property type="match status" value="1"/>
</dbReference>
<dbReference type="FunFam" id="2.60.40.10:FF:000062">
    <property type="entry name" value="Myosin-binding protein C, slow type"/>
    <property type="match status" value="1"/>
</dbReference>
<dbReference type="Gene3D" id="2.60.40.10">
    <property type="entry name" value="Immunoglobulins"/>
    <property type="match status" value="4"/>
</dbReference>
<dbReference type="InterPro" id="IPR003961">
    <property type="entry name" value="FN3_dom"/>
</dbReference>
<dbReference type="InterPro" id="IPR036116">
    <property type="entry name" value="FN3_sf"/>
</dbReference>
<dbReference type="InterPro" id="IPR007110">
    <property type="entry name" value="Ig-like_dom"/>
</dbReference>
<dbReference type="InterPro" id="IPR036179">
    <property type="entry name" value="Ig-like_dom_sf"/>
</dbReference>
<dbReference type="InterPro" id="IPR013783">
    <property type="entry name" value="Ig-like_fold"/>
</dbReference>
<dbReference type="InterPro" id="IPR013098">
    <property type="entry name" value="Ig_I-set"/>
</dbReference>
<dbReference type="InterPro" id="IPR003599">
    <property type="entry name" value="Ig_sub"/>
</dbReference>
<dbReference type="InterPro" id="IPR003598">
    <property type="entry name" value="Ig_sub2"/>
</dbReference>
<dbReference type="InterPro" id="IPR050964">
    <property type="entry name" value="Striated_Muscle_Regulatory"/>
</dbReference>
<dbReference type="PANTHER" id="PTHR13817:SF171">
    <property type="entry name" value="STRETCHIN-MLCK, ISOFORM U"/>
    <property type="match status" value="1"/>
</dbReference>
<dbReference type="PANTHER" id="PTHR13817">
    <property type="entry name" value="TITIN"/>
    <property type="match status" value="1"/>
</dbReference>
<dbReference type="Pfam" id="PF00041">
    <property type="entry name" value="fn3"/>
    <property type="match status" value="2"/>
</dbReference>
<dbReference type="Pfam" id="PF07679">
    <property type="entry name" value="I-set"/>
    <property type="match status" value="2"/>
</dbReference>
<dbReference type="PRINTS" id="PR00014">
    <property type="entry name" value="FNTYPEIII"/>
</dbReference>
<dbReference type="SMART" id="SM00060">
    <property type="entry name" value="FN3"/>
    <property type="match status" value="2"/>
</dbReference>
<dbReference type="SMART" id="SM00409">
    <property type="entry name" value="IG"/>
    <property type="match status" value="2"/>
</dbReference>
<dbReference type="SMART" id="SM00408">
    <property type="entry name" value="IGc2"/>
    <property type="match status" value="2"/>
</dbReference>
<dbReference type="SUPFAM" id="SSF49265">
    <property type="entry name" value="Fibronectin type III"/>
    <property type="match status" value="1"/>
</dbReference>
<dbReference type="SUPFAM" id="SSF48726">
    <property type="entry name" value="Immunoglobulin"/>
    <property type="match status" value="2"/>
</dbReference>
<dbReference type="PROSITE" id="PS50853">
    <property type="entry name" value="FN3"/>
    <property type="match status" value="2"/>
</dbReference>
<dbReference type="PROSITE" id="PS50835">
    <property type="entry name" value="IG_LIKE"/>
    <property type="match status" value="2"/>
</dbReference>
<feature type="chain" id="PRO_0000072699" description="Myosin-binding protein H">
    <location>
        <begin position="1"/>
        <end position="483"/>
    </location>
</feature>
<feature type="domain" description="Fibronectin type-III 1" evidence="2">
    <location>
        <begin position="79"/>
        <end position="174"/>
    </location>
</feature>
<feature type="domain" description="Ig-like C2-type 1">
    <location>
        <begin position="178"/>
        <end position="266"/>
    </location>
</feature>
<feature type="domain" description="Fibronectin type-III 2" evidence="2">
    <location>
        <begin position="275"/>
        <end position="370"/>
    </location>
</feature>
<feature type="domain" description="Ig-like C2-type 2">
    <location>
        <begin position="388"/>
        <end position="472"/>
    </location>
</feature>
<feature type="region of interest" description="Disordered" evidence="3">
    <location>
        <begin position="1"/>
        <end position="78"/>
    </location>
</feature>
<feature type="compositionally biased region" description="Polar residues" evidence="3">
    <location>
        <begin position="1"/>
        <end position="15"/>
    </location>
</feature>
<feature type="compositionally biased region" description="Low complexity" evidence="3">
    <location>
        <begin position="41"/>
        <end position="66"/>
    </location>
</feature>
<feature type="modified residue" description="Phosphothreonine" evidence="1">
    <location>
        <position position="2"/>
    </location>
</feature>
<feature type="modified residue" description="Phosphothreonine" evidence="1">
    <location>
        <position position="6"/>
    </location>
</feature>
<feature type="modified residue" description="Phosphothreonine" evidence="1">
    <location>
        <position position="26"/>
    </location>
</feature>
<feature type="sequence conflict" description="In Ref. 1; AAB08426." evidence="5" ref="1">
    <original>R</original>
    <variation>C</variation>
    <location>
        <position position="249"/>
    </location>
</feature>
<organism>
    <name type="scientific">Mus musculus</name>
    <name type="common">Mouse</name>
    <dbReference type="NCBI Taxonomy" id="10090"/>
    <lineage>
        <taxon>Eukaryota</taxon>
        <taxon>Metazoa</taxon>
        <taxon>Chordata</taxon>
        <taxon>Craniata</taxon>
        <taxon>Vertebrata</taxon>
        <taxon>Euteleostomi</taxon>
        <taxon>Mammalia</taxon>
        <taxon>Eutheria</taxon>
        <taxon>Euarchontoglires</taxon>
        <taxon>Glires</taxon>
        <taxon>Rodentia</taxon>
        <taxon>Myomorpha</taxon>
        <taxon>Muroidea</taxon>
        <taxon>Muridae</taxon>
        <taxon>Murinae</taxon>
        <taxon>Mus</taxon>
        <taxon>Mus</taxon>
    </lineage>
</organism>
<gene>
    <name type="primary">Mybph</name>
</gene>
<accession>P70402</accession>
<accession>E9QKH7</accession>
<keyword id="KW-0130">Cell adhesion</keyword>
<keyword id="KW-0393">Immunoglobulin domain</keyword>
<keyword id="KW-0514">Muscle protein</keyword>
<keyword id="KW-0597">Phosphoprotein</keyword>
<keyword id="KW-1185">Reference proteome</keyword>
<keyword id="KW-0677">Repeat</keyword>
<keyword id="KW-0787">Thick filament</keyword>